<feature type="chain" id="PRO_1000145526" description="Glutathione-regulated potassium-efflux system protein KefB">
    <location>
        <begin position="1"/>
        <end position="601"/>
    </location>
</feature>
<feature type="transmembrane region" description="Helical" evidence="1">
    <location>
        <begin position="4"/>
        <end position="24"/>
    </location>
</feature>
<feature type="transmembrane region" description="Helical" evidence="1">
    <location>
        <begin position="29"/>
        <end position="49"/>
    </location>
</feature>
<feature type="transmembrane region" description="Helical" evidence="1">
    <location>
        <begin position="55"/>
        <end position="75"/>
    </location>
</feature>
<feature type="transmembrane region" description="Helical" evidence="1">
    <location>
        <begin position="87"/>
        <end position="107"/>
    </location>
</feature>
<feature type="transmembrane region" description="Helical" evidence="1">
    <location>
        <begin position="111"/>
        <end position="131"/>
    </location>
</feature>
<feature type="transmembrane region" description="Helical" evidence="1">
    <location>
        <begin position="152"/>
        <end position="172"/>
    </location>
</feature>
<feature type="transmembrane region" description="Helical" evidence="1">
    <location>
        <begin position="177"/>
        <end position="197"/>
    </location>
</feature>
<feature type="transmembrane region" description="Helical" evidence="1">
    <location>
        <begin position="207"/>
        <end position="227"/>
    </location>
</feature>
<feature type="transmembrane region" description="Helical" evidence="1">
    <location>
        <begin position="230"/>
        <end position="250"/>
    </location>
</feature>
<feature type="transmembrane region" description="Helical" evidence="1">
    <location>
        <begin position="262"/>
        <end position="282"/>
    </location>
</feature>
<feature type="transmembrane region" description="Helical" evidence="1">
    <location>
        <begin position="284"/>
        <end position="304"/>
    </location>
</feature>
<feature type="transmembrane region" description="Helical" evidence="1">
    <location>
        <begin position="324"/>
        <end position="344"/>
    </location>
</feature>
<feature type="transmembrane region" description="Helical" evidence="1">
    <location>
        <begin position="356"/>
        <end position="376"/>
    </location>
</feature>
<feature type="domain" description="RCK N-terminal" evidence="2">
    <location>
        <begin position="400"/>
        <end position="519"/>
    </location>
</feature>
<dbReference type="EMBL" id="CP001144">
    <property type="protein sequence ID" value="ACH74926.1"/>
    <property type="molecule type" value="Genomic_DNA"/>
</dbReference>
<dbReference type="RefSeq" id="WP_000398136.1">
    <property type="nucleotide sequence ID" value="NC_011205.1"/>
</dbReference>
<dbReference type="SMR" id="B5FJN1"/>
<dbReference type="KEGG" id="sed:SeD_A3825"/>
<dbReference type="HOGENOM" id="CLU_005126_9_3_6"/>
<dbReference type="Proteomes" id="UP000008322">
    <property type="component" value="Chromosome"/>
</dbReference>
<dbReference type="GO" id="GO:0005886">
    <property type="term" value="C:plasma membrane"/>
    <property type="evidence" value="ECO:0007669"/>
    <property type="project" value="UniProtKB-SubCell"/>
</dbReference>
<dbReference type="GO" id="GO:0015503">
    <property type="term" value="F:glutathione-regulated potassium exporter activity"/>
    <property type="evidence" value="ECO:0007669"/>
    <property type="project" value="UniProtKB-UniRule"/>
</dbReference>
<dbReference type="GO" id="GO:1902600">
    <property type="term" value="P:proton transmembrane transport"/>
    <property type="evidence" value="ECO:0007669"/>
    <property type="project" value="InterPro"/>
</dbReference>
<dbReference type="FunFam" id="1.20.1530.20:FF:000001">
    <property type="entry name" value="Glutathione-regulated potassium-efflux system protein KefB"/>
    <property type="match status" value="1"/>
</dbReference>
<dbReference type="FunFam" id="3.40.50.720:FF:000036">
    <property type="entry name" value="Glutathione-regulated potassium-efflux system protein KefB"/>
    <property type="match status" value="1"/>
</dbReference>
<dbReference type="Gene3D" id="1.20.1530.20">
    <property type="match status" value="1"/>
</dbReference>
<dbReference type="Gene3D" id="3.40.50.720">
    <property type="entry name" value="NAD(P)-binding Rossmann-like Domain"/>
    <property type="match status" value="1"/>
</dbReference>
<dbReference type="HAMAP" id="MF_01412">
    <property type="entry name" value="K_H_efflux_KefB"/>
    <property type="match status" value="1"/>
</dbReference>
<dbReference type="InterPro" id="IPR006153">
    <property type="entry name" value="Cation/H_exchanger_TM"/>
</dbReference>
<dbReference type="InterPro" id="IPR004771">
    <property type="entry name" value="K/H_exchanger"/>
</dbReference>
<dbReference type="InterPro" id="IPR020884">
    <property type="entry name" value="K_H_efflux_KefB"/>
</dbReference>
<dbReference type="InterPro" id="IPR006036">
    <property type="entry name" value="K_uptake_TrkA"/>
</dbReference>
<dbReference type="InterPro" id="IPR038770">
    <property type="entry name" value="Na+/solute_symporter_sf"/>
</dbReference>
<dbReference type="InterPro" id="IPR036291">
    <property type="entry name" value="NAD(P)-bd_dom_sf"/>
</dbReference>
<dbReference type="InterPro" id="IPR003148">
    <property type="entry name" value="RCK_N"/>
</dbReference>
<dbReference type="NCBIfam" id="TIGR00932">
    <property type="entry name" value="2a37"/>
    <property type="match status" value="1"/>
</dbReference>
<dbReference type="NCBIfam" id="NF002973">
    <property type="entry name" value="PRK03659.1"/>
    <property type="match status" value="1"/>
</dbReference>
<dbReference type="PANTHER" id="PTHR46157">
    <property type="entry name" value="K(+) EFFLUX ANTIPORTER 3, CHLOROPLASTIC"/>
    <property type="match status" value="1"/>
</dbReference>
<dbReference type="PANTHER" id="PTHR46157:SF4">
    <property type="entry name" value="K(+) EFFLUX ANTIPORTER 3, CHLOROPLASTIC"/>
    <property type="match status" value="1"/>
</dbReference>
<dbReference type="Pfam" id="PF00999">
    <property type="entry name" value="Na_H_Exchanger"/>
    <property type="match status" value="1"/>
</dbReference>
<dbReference type="Pfam" id="PF02254">
    <property type="entry name" value="TrkA_N"/>
    <property type="match status" value="1"/>
</dbReference>
<dbReference type="PRINTS" id="PR00335">
    <property type="entry name" value="KUPTAKETRKA"/>
</dbReference>
<dbReference type="SUPFAM" id="SSF51735">
    <property type="entry name" value="NAD(P)-binding Rossmann-fold domains"/>
    <property type="match status" value="1"/>
</dbReference>
<dbReference type="PROSITE" id="PS51201">
    <property type="entry name" value="RCK_N"/>
    <property type="match status" value="1"/>
</dbReference>
<sequence length="601" mass="66459">MEGADLLTAGVLFLFAAVAAVPLAARLGIGAVLGYLLAGIAIGPWGLGFISDVDEILHFSELGVVFLMFIIGLELNPSRLWQLRRSIFGVGAAQVLLSAAVLAGLLMLADFLWQAAVVGGIGLAMSSTAMALQLMREKGMNRSESGQLGFSVLLFQDLAVIPALALVPLLAGSADEHFDWFKVAMKVLAFAVMLIGGRYLLRPVFRFIAASGVREVFTAATLLLVLSAALFMDALGLSMALGTFIAGVLLAESEYRHELENAIDPFKGLLLGLFFISVGMSLNLGVLYTHLLWVAASVVILVVIKMLTLYLLARLYGIRSSERMQFASVLSQGGEFAFVLFSTASSQRLFQGDQMALLLVTVTLSMMTTPLLMKGIDKWLSRRLNGPEENDEKPWVEDDKPQVIVVGFGRFGQVIARLLMANKMRITVLERDIGAVNLMRKYGYKVYYGDATQVELLRSAGAEAAESIVITCNEPEDTMKLVELCQQHFPHLHILARARGRVEAHELLQAGVTQFSRETFSSALELGRKTLVSLGMHPHQAQRAQLHFRRLDMRMLRELIPEHSDMVQISRAREARRELEEIFQREMQQERRQLDGWDKFE</sequence>
<protein>
    <recommendedName>
        <fullName evidence="1">Glutathione-regulated potassium-efflux system protein KefB</fullName>
    </recommendedName>
    <alternativeName>
        <fullName evidence="1">K(+)/H(+) antiporter</fullName>
    </alternativeName>
</protein>
<name>KEFB_SALDC</name>
<proteinExistence type="inferred from homology"/>
<gene>
    <name evidence="1" type="primary">kefB</name>
    <name type="ordered locus">SeD_A3825</name>
</gene>
<organism>
    <name type="scientific">Salmonella dublin (strain CT_02021853)</name>
    <dbReference type="NCBI Taxonomy" id="439851"/>
    <lineage>
        <taxon>Bacteria</taxon>
        <taxon>Pseudomonadati</taxon>
        <taxon>Pseudomonadota</taxon>
        <taxon>Gammaproteobacteria</taxon>
        <taxon>Enterobacterales</taxon>
        <taxon>Enterobacteriaceae</taxon>
        <taxon>Salmonella</taxon>
    </lineage>
</organism>
<accession>B5FJN1</accession>
<evidence type="ECO:0000255" key="1">
    <source>
        <dbReference type="HAMAP-Rule" id="MF_01412"/>
    </source>
</evidence>
<evidence type="ECO:0000255" key="2">
    <source>
        <dbReference type="PROSITE-ProRule" id="PRU00543"/>
    </source>
</evidence>
<keyword id="KW-0050">Antiport</keyword>
<keyword id="KW-0997">Cell inner membrane</keyword>
<keyword id="KW-1003">Cell membrane</keyword>
<keyword id="KW-0406">Ion transport</keyword>
<keyword id="KW-0472">Membrane</keyword>
<keyword id="KW-0630">Potassium</keyword>
<keyword id="KW-0633">Potassium transport</keyword>
<keyword id="KW-0812">Transmembrane</keyword>
<keyword id="KW-1133">Transmembrane helix</keyword>
<keyword id="KW-0813">Transport</keyword>
<comment type="function">
    <text evidence="1">Pore-forming subunit of a potassium efflux system that confers protection against electrophiles. Catalyzes K(+)/H(+) antiport.</text>
</comment>
<comment type="subunit">
    <text evidence="1">Interacts with the regulatory subunit KefG.</text>
</comment>
<comment type="subcellular location">
    <subcellularLocation>
        <location evidence="1">Cell inner membrane</location>
        <topology evidence="1">Multi-pass membrane protein</topology>
    </subcellularLocation>
</comment>
<comment type="similarity">
    <text evidence="1">Belongs to the monovalent cation:proton antiporter 2 (CPA2) transporter (TC 2.A.37) family. KefB subfamily.</text>
</comment>
<reference key="1">
    <citation type="journal article" date="2011" name="J. Bacteriol.">
        <title>Comparative genomics of 28 Salmonella enterica isolates: evidence for CRISPR-mediated adaptive sublineage evolution.</title>
        <authorList>
            <person name="Fricke W.F."/>
            <person name="Mammel M.K."/>
            <person name="McDermott P.F."/>
            <person name="Tartera C."/>
            <person name="White D.G."/>
            <person name="Leclerc J.E."/>
            <person name="Ravel J."/>
            <person name="Cebula T.A."/>
        </authorList>
    </citation>
    <scope>NUCLEOTIDE SEQUENCE [LARGE SCALE GENOMIC DNA]</scope>
    <source>
        <strain>CT_02021853</strain>
    </source>
</reference>